<keyword id="KW-0040">ANK repeat</keyword>
<keyword id="KW-1185">Reference proteome</keyword>
<keyword id="KW-0677">Repeat</keyword>
<accession>Q5UPJ9</accession>
<feature type="chain" id="PRO_0000067160" description="Putative ankyrin repeat protein L122">
    <location>
        <begin position="1"/>
        <end position="627"/>
    </location>
</feature>
<feature type="repeat" description="ANK 1">
    <location>
        <begin position="61"/>
        <end position="94"/>
    </location>
</feature>
<feature type="repeat" description="ANK 2">
    <location>
        <begin position="98"/>
        <end position="130"/>
    </location>
</feature>
<feature type="repeat" description="ANK 3">
    <location>
        <begin position="153"/>
        <end position="186"/>
    </location>
</feature>
<feature type="repeat" description="ANK 4">
    <location>
        <begin position="190"/>
        <end position="223"/>
    </location>
</feature>
<feature type="repeat" description="ANK 5">
    <location>
        <begin position="228"/>
        <end position="259"/>
    </location>
</feature>
<feature type="repeat" description="ANK 6">
    <location>
        <begin position="263"/>
        <end position="296"/>
    </location>
</feature>
<feature type="repeat" description="ANK 7">
    <location>
        <begin position="300"/>
        <end position="333"/>
    </location>
</feature>
<feature type="repeat" description="ANK 8">
    <location>
        <begin position="337"/>
        <end position="370"/>
    </location>
</feature>
<feature type="repeat" description="ANK 9">
    <location>
        <begin position="374"/>
        <end position="407"/>
    </location>
</feature>
<feature type="repeat" description="ANK 10">
    <location>
        <begin position="411"/>
        <end position="444"/>
    </location>
</feature>
<feature type="repeat" description="ANK 11">
    <location>
        <begin position="448"/>
        <end position="480"/>
    </location>
</feature>
<feature type="repeat" description="ANK 12">
    <location>
        <begin position="491"/>
        <end position="523"/>
    </location>
</feature>
<dbReference type="EMBL" id="AY653733">
    <property type="protein sequence ID" value="AAV50397.1"/>
    <property type="molecule type" value="Genomic_DNA"/>
</dbReference>
<dbReference type="SMR" id="Q5UPJ9"/>
<dbReference type="KEGG" id="vg:9924721"/>
<dbReference type="OrthoDB" id="631at10240"/>
<dbReference type="Proteomes" id="UP000001134">
    <property type="component" value="Genome"/>
</dbReference>
<dbReference type="Gene3D" id="1.25.40.20">
    <property type="entry name" value="Ankyrin repeat-containing domain"/>
    <property type="match status" value="4"/>
</dbReference>
<dbReference type="InterPro" id="IPR002110">
    <property type="entry name" value="Ankyrin_rpt"/>
</dbReference>
<dbReference type="InterPro" id="IPR036770">
    <property type="entry name" value="Ankyrin_rpt-contain_sf"/>
</dbReference>
<dbReference type="PANTHER" id="PTHR24178">
    <property type="entry name" value="MOLTING PROTEIN MLT-4"/>
    <property type="match status" value="1"/>
</dbReference>
<dbReference type="Pfam" id="PF12796">
    <property type="entry name" value="Ank_2"/>
    <property type="match status" value="3"/>
</dbReference>
<dbReference type="SMART" id="SM00248">
    <property type="entry name" value="ANK"/>
    <property type="match status" value="12"/>
</dbReference>
<dbReference type="SUPFAM" id="SSF48403">
    <property type="entry name" value="Ankyrin repeat"/>
    <property type="match status" value="2"/>
</dbReference>
<dbReference type="PROSITE" id="PS50297">
    <property type="entry name" value="ANK_REP_REGION"/>
    <property type="match status" value="1"/>
</dbReference>
<dbReference type="PROSITE" id="PS50088">
    <property type="entry name" value="ANK_REPEAT"/>
    <property type="match status" value="8"/>
</dbReference>
<name>YL122_MIMIV</name>
<sequence length="627" mass="71885">MAHVGNYSRNGYYPYYNNKFCGNFTELMYLIIVEKNRSDGYSNIKKHLVDNIETINYRNEKGWTALMIACAMCDKWSSFKTIRLLLKKGADVHIENNKGRTVLSLMVNIITENKFNIMDLLIDKGADINSQDNKNKTPLIHACKKELDDTYLHACYVLGKSVDPNLEKNDSKTVRYLLDKGADPNIEEHYGKTVLFYAARMKNQDKAYEISKTLIERGGNANHTNHYAETVLIYLCISCSHYSCELIQLLLDNGVDINHQNRIGFTALMCACINIKNPSNFETIKFMLDKGANINLKNNDGFTAFMNIFGNNYFDYIVPVIQIMLDYGADINDKNNNNVTVLMMAVKFAKNDKNMTVINFLLDKGADLEIRNDYDWTALFYACRYSNSSGNNDAVKLLLDYGANVNVNTLLGHTPLIIACQYADNESNIDTVKLLLEYGANPNLTNLDKNTALSVAITWLSKNRYEVVKLLLYYHADSNTYLYLNSEGTVREYNLLVWIVKNIKCNKLDLLMLLIEHGANYSDIKGYIFQENLDNGDIEKFMKFTNIMENIKLVKKSIIDCIPKRVPEIIFNTNSMISQLLSLKWKAYSSDYKDLITLKDLDIIDYLGVYDIDSLYDRIIDITKYAY</sequence>
<reference key="1">
    <citation type="journal article" date="2004" name="Science">
        <title>The 1.2-megabase genome sequence of Mimivirus.</title>
        <authorList>
            <person name="Raoult D."/>
            <person name="Audic S."/>
            <person name="Robert C."/>
            <person name="Abergel C."/>
            <person name="Renesto P."/>
            <person name="Ogata H."/>
            <person name="La Scola B."/>
            <person name="Susan M."/>
            <person name="Claverie J.-M."/>
        </authorList>
    </citation>
    <scope>NUCLEOTIDE SEQUENCE [LARGE SCALE GENOMIC DNA]</scope>
    <source>
        <strain>Rowbotham-Bradford</strain>
    </source>
</reference>
<protein>
    <recommendedName>
        <fullName>Putative ankyrin repeat protein L122</fullName>
    </recommendedName>
</protein>
<organismHost>
    <name type="scientific">Acanthamoeba polyphaga</name>
    <name type="common">Amoeba</name>
    <dbReference type="NCBI Taxonomy" id="5757"/>
</organismHost>
<gene>
    <name type="ordered locus">MIMI_L122</name>
</gene>
<organism>
    <name type="scientific">Acanthamoeba polyphaga mimivirus</name>
    <name type="common">APMV</name>
    <dbReference type="NCBI Taxonomy" id="212035"/>
    <lineage>
        <taxon>Viruses</taxon>
        <taxon>Varidnaviria</taxon>
        <taxon>Bamfordvirae</taxon>
        <taxon>Nucleocytoviricota</taxon>
        <taxon>Megaviricetes</taxon>
        <taxon>Imitervirales</taxon>
        <taxon>Mimiviridae</taxon>
        <taxon>Megamimivirinae</taxon>
        <taxon>Mimivirus</taxon>
        <taxon>Mimivirus bradfordmassiliense</taxon>
    </lineage>
</organism>
<proteinExistence type="predicted"/>